<name>UVRC_THEPX</name>
<protein>
    <recommendedName>
        <fullName evidence="1">UvrABC system protein C</fullName>
        <shortName evidence="1">Protein UvrC</shortName>
    </recommendedName>
    <alternativeName>
        <fullName evidence="1">Excinuclease ABC subunit C</fullName>
    </alternativeName>
</protein>
<proteinExistence type="inferred from homology"/>
<keyword id="KW-0963">Cytoplasm</keyword>
<keyword id="KW-0227">DNA damage</keyword>
<keyword id="KW-0228">DNA excision</keyword>
<keyword id="KW-0234">DNA repair</keyword>
<keyword id="KW-0267">Excision nuclease</keyword>
<keyword id="KW-0742">SOS response</keyword>
<feature type="chain" id="PRO_1000099530" description="UvrABC system protein C">
    <location>
        <begin position="1"/>
        <end position="615"/>
    </location>
</feature>
<feature type="domain" description="GIY-YIG" evidence="1">
    <location>
        <begin position="12"/>
        <end position="91"/>
    </location>
</feature>
<feature type="domain" description="UVR" evidence="1">
    <location>
        <begin position="203"/>
        <end position="238"/>
    </location>
</feature>
<accession>B0K680</accession>
<reference key="1">
    <citation type="submission" date="2008-01" db="EMBL/GenBank/DDBJ databases">
        <title>Complete sequence of Thermoanaerobacter sp. X514.</title>
        <authorList>
            <consortium name="US DOE Joint Genome Institute"/>
            <person name="Copeland A."/>
            <person name="Lucas S."/>
            <person name="Lapidus A."/>
            <person name="Barry K."/>
            <person name="Glavina del Rio T."/>
            <person name="Dalin E."/>
            <person name="Tice H."/>
            <person name="Pitluck S."/>
            <person name="Bruce D."/>
            <person name="Goodwin L."/>
            <person name="Saunders E."/>
            <person name="Brettin T."/>
            <person name="Detter J.C."/>
            <person name="Han C."/>
            <person name="Schmutz J."/>
            <person name="Larimer F."/>
            <person name="Land M."/>
            <person name="Hauser L."/>
            <person name="Kyrpides N."/>
            <person name="Kim E."/>
            <person name="Hemme C."/>
            <person name="Fields M.W."/>
            <person name="He Z."/>
            <person name="Zhou J."/>
            <person name="Richardson P."/>
        </authorList>
    </citation>
    <scope>NUCLEOTIDE SEQUENCE [LARGE SCALE GENOMIC DNA]</scope>
    <source>
        <strain>X514</strain>
    </source>
</reference>
<gene>
    <name evidence="1" type="primary">uvrC</name>
    <name type="ordered locus">Teth514_1057</name>
</gene>
<dbReference type="EMBL" id="CP000923">
    <property type="protein sequence ID" value="ABY92356.1"/>
    <property type="molecule type" value="Genomic_DNA"/>
</dbReference>
<dbReference type="RefSeq" id="WP_009052763.1">
    <property type="nucleotide sequence ID" value="NC_010320.1"/>
</dbReference>
<dbReference type="SMR" id="B0K680"/>
<dbReference type="KEGG" id="tex:Teth514_1057"/>
<dbReference type="HOGENOM" id="CLU_014841_3_2_9"/>
<dbReference type="Proteomes" id="UP000002155">
    <property type="component" value="Chromosome"/>
</dbReference>
<dbReference type="GO" id="GO:0005737">
    <property type="term" value="C:cytoplasm"/>
    <property type="evidence" value="ECO:0007669"/>
    <property type="project" value="UniProtKB-SubCell"/>
</dbReference>
<dbReference type="GO" id="GO:0009380">
    <property type="term" value="C:excinuclease repair complex"/>
    <property type="evidence" value="ECO:0007669"/>
    <property type="project" value="InterPro"/>
</dbReference>
<dbReference type="GO" id="GO:0003677">
    <property type="term" value="F:DNA binding"/>
    <property type="evidence" value="ECO:0007669"/>
    <property type="project" value="UniProtKB-UniRule"/>
</dbReference>
<dbReference type="GO" id="GO:0009381">
    <property type="term" value="F:excinuclease ABC activity"/>
    <property type="evidence" value="ECO:0007669"/>
    <property type="project" value="UniProtKB-UniRule"/>
</dbReference>
<dbReference type="GO" id="GO:0006289">
    <property type="term" value="P:nucleotide-excision repair"/>
    <property type="evidence" value="ECO:0007669"/>
    <property type="project" value="UniProtKB-UniRule"/>
</dbReference>
<dbReference type="GO" id="GO:0009432">
    <property type="term" value="P:SOS response"/>
    <property type="evidence" value="ECO:0007669"/>
    <property type="project" value="UniProtKB-UniRule"/>
</dbReference>
<dbReference type="CDD" id="cd10434">
    <property type="entry name" value="GIY-YIG_UvrC_Cho"/>
    <property type="match status" value="1"/>
</dbReference>
<dbReference type="FunFam" id="3.40.1440.10:FF:000001">
    <property type="entry name" value="UvrABC system protein C"/>
    <property type="match status" value="1"/>
</dbReference>
<dbReference type="Gene3D" id="1.10.150.20">
    <property type="entry name" value="5' to 3' exonuclease, C-terminal subdomain"/>
    <property type="match status" value="1"/>
</dbReference>
<dbReference type="Gene3D" id="3.40.1440.10">
    <property type="entry name" value="GIY-YIG endonuclease"/>
    <property type="match status" value="1"/>
</dbReference>
<dbReference type="Gene3D" id="4.10.860.10">
    <property type="entry name" value="UVR domain"/>
    <property type="match status" value="1"/>
</dbReference>
<dbReference type="Gene3D" id="3.30.420.340">
    <property type="entry name" value="UvrC, RNAse H endonuclease domain"/>
    <property type="match status" value="1"/>
</dbReference>
<dbReference type="HAMAP" id="MF_00203">
    <property type="entry name" value="UvrC"/>
    <property type="match status" value="1"/>
</dbReference>
<dbReference type="InterPro" id="IPR000305">
    <property type="entry name" value="GIY-YIG_endonuc"/>
</dbReference>
<dbReference type="InterPro" id="IPR035901">
    <property type="entry name" value="GIY-YIG_endonuc_sf"/>
</dbReference>
<dbReference type="InterPro" id="IPR047296">
    <property type="entry name" value="GIY-YIG_UvrC_Cho"/>
</dbReference>
<dbReference type="InterPro" id="IPR003583">
    <property type="entry name" value="Hlx-hairpin-Hlx_DNA-bd_motif"/>
</dbReference>
<dbReference type="InterPro" id="IPR010994">
    <property type="entry name" value="RuvA_2-like"/>
</dbReference>
<dbReference type="InterPro" id="IPR001943">
    <property type="entry name" value="UVR_dom"/>
</dbReference>
<dbReference type="InterPro" id="IPR036876">
    <property type="entry name" value="UVR_dom_sf"/>
</dbReference>
<dbReference type="InterPro" id="IPR050066">
    <property type="entry name" value="UvrABC_protein_C"/>
</dbReference>
<dbReference type="InterPro" id="IPR004791">
    <property type="entry name" value="UvrC"/>
</dbReference>
<dbReference type="InterPro" id="IPR001162">
    <property type="entry name" value="UvrC_RNase_H_dom"/>
</dbReference>
<dbReference type="InterPro" id="IPR038476">
    <property type="entry name" value="UvrC_RNase_H_dom_sf"/>
</dbReference>
<dbReference type="NCBIfam" id="NF001824">
    <property type="entry name" value="PRK00558.1-5"/>
    <property type="match status" value="1"/>
</dbReference>
<dbReference type="NCBIfam" id="TIGR00194">
    <property type="entry name" value="uvrC"/>
    <property type="match status" value="1"/>
</dbReference>
<dbReference type="PANTHER" id="PTHR30562:SF1">
    <property type="entry name" value="UVRABC SYSTEM PROTEIN C"/>
    <property type="match status" value="1"/>
</dbReference>
<dbReference type="PANTHER" id="PTHR30562">
    <property type="entry name" value="UVRC/OXIDOREDUCTASE"/>
    <property type="match status" value="1"/>
</dbReference>
<dbReference type="Pfam" id="PF01541">
    <property type="entry name" value="GIY-YIG"/>
    <property type="match status" value="1"/>
</dbReference>
<dbReference type="Pfam" id="PF14520">
    <property type="entry name" value="HHH_5"/>
    <property type="match status" value="1"/>
</dbReference>
<dbReference type="Pfam" id="PF02151">
    <property type="entry name" value="UVR"/>
    <property type="match status" value="1"/>
</dbReference>
<dbReference type="Pfam" id="PF22920">
    <property type="entry name" value="UvrC_RNaseH"/>
    <property type="match status" value="1"/>
</dbReference>
<dbReference type="Pfam" id="PF08459">
    <property type="entry name" value="UvrC_RNaseH_dom"/>
    <property type="match status" value="1"/>
</dbReference>
<dbReference type="SMART" id="SM00465">
    <property type="entry name" value="GIYc"/>
    <property type="match status" value="1"/>
</dbReference>
<dbReference type="SMART" id="SM00278">
    <property type="entry name" value="HhH1"/>
    <property type="match status" value="2"/>
</dbReference>
<dbReference type="SUPFAM" id="SSF46600">
    <property type="entry name" value="C-terminal UvrC-binding domain of UvrB"/>
    <property type="match status" value="1"/>
</dbReference>
<dbReference type="SUPFAM" id="SSF82771">
    <property type="entry name" value="GIY-YIG endonuclease"/>
    <property type="match status" value="1"/>
</dbReference>
<dbReference type="SUPFAM" id="SSF47781">
    <property type="entry name" value="RuvA domain 2-like"/>
    <property type="match status" value="1"/>
</dbReference>
<dbReference type="PROSITE" id="PS50164">
    <property type="entry name" value="GIY_YIG"/>
    <property type="match status" value="1"/>
</dbReference>
<dbReference type="PROSITE" id="PS50151">
    <property type="entry name" value="UVR"/>
    <property type="match status" value="1"/>
</dbReference>
<dbReference type="PROSITE" id="PS50165">
    <property type="entry name" value="UVRC"/>
    <property type="match status" value="1"/>
</dbReference>
<sequence>MTIEEKLKLLPEKPGVYIMKDKSGKIIYVGKAVVLKNRVRQYFQNKEKQLPKVKVMLSHVEDFEYIVTDTELEALMLECNLIKKYKPKYNVLLKDDKNYPYIKVTVNEEYPRIMFTRRIEPDGAKYFGPYSSAFAVRETIKLVRKMFPIRTCNKNIEKDMGKVRECLYYHIGLCSAPCTNKINKEDYIKLVDQAVLFLDGKRDWLIQKLKEDMKKAAEELRFEEAARIRDQIFAIERTSEKQKVVSVGEDEQDIISMARSADISCIQVFFVRDGKLSGREHYYMKNTEGMERGEIISSFIKQFYEGAPYIPKEIITDVELDESELLSEWLSQKRGNKVFITIPVRGKKKELVDMVYQNALEALKNDISIREEISKDQVVLELSNLVGLDYAKRIEAYDISNTRGQDNVGSMVVFVDGKPKKSQYRKFNIKYVEGQDDYESMREVIERRFLHAIEEKELIEKGELEEDKAKFAEMPDLIFVDGGIGHVNAVLQVLSGLGISIPVYGMVKDSKHRTRGLVSPQGEIDIPMTTKAFRLIAQIQEEAHRFAITFHKEKQSKRFKSELLNIPGIGKKRAKALYDAFKSIEEIKRASVEDLKKVEGMNEKAAQAVYEYFRK</sequence>
<evidence type="ECO:0000255" key="1">
    <source>
        <dbReference type="HAMAP-Rule" id="MF_00203"/>
    </source>
</evidence>
<organism>
    <name type="scientific">Thermoanaerobacter sp. (strain X514)</name>
    <dbReference type="NCBI Taxonomy" id="399726"/>
    <lineage>
        <taxon>Bacteria</taxon>
        <taxon>Bacillati</taxon>
        <taxon>Bacillota</taxon>
        <taxon>Clostridia</taxon>
        <taxon>Thermoanaerobacterales</taxon>
        <taxon>Thermoanaerobacteraceae</taxon>
        <taxon>Thermoanaerobacter</taxon>
    </lineage>
</organism>
<comment type="function">
    <text evidence="1">The UvrABC repair system catalyzes the recognition and processing of DNA lesions. UvrC both incises the 5' and 3' sides of the lesion. The N-terminal half is responsible for the 3' incision and the C-terminal half is responsible for the 5' incision.</text>
</comment>
<comment type="subunit">
    <text evidence="1">Interacts with UvrB in an incision complex.</text>
</comment>
<comment type="subcellular location">
    <subcellularLocation>
        <location evidence="1">Cytoplasm</location>
    </subcellularLocation>
</comment>
<comment type="similarity">
    <text evidence="1">Belongs to the UvrC family.</text>
</comment>